<evidence type="ECO:0000250" key="1"/>
<evidence type="ECO:0000255" key="2"/>
<evidence type="ECO:0000256" key="3">
    <source>
        <dbReference type="SAM" id="MobiDB-lite"/>
    </source>
</evidence>
<evidence type="ECO:0000305" key="4"/>
<reference key="1">
    <citation type="journal article" date="2002" name="Nature">
        <title>The genome sequence of Schizosaccharomyces pombe.</title>
        <authorList>
            <person name="Wood V."/>
            <person name="Gwilliam R."/>
            <person name="Rajandream M.A."/>
            <person name="Lyne M.H."/>
            <person name="Lyne R."/>
            <person name="Stewart A."/>
            <person name="Sgouros J.G."/>
            <person name="Peat N."/>
            <person name="Hayles J."/>
            <person name="Baker S.G."/>
            <person name="Basham D."/>
            <person name="Bowman S."/>
            <person name="Brooks K."/>
            <person name="Brown D."/>
            <person name="Brown S."/>
            <person name="Chillingworth T."/>
            <person name="Churcher C.M."/>
            <person name="Collins M."/>
            <person name="Connor R."/>
            <person name="Cronin A."/>
            <person name="Davis P."/>
            <person name="Feltwell T."/>
            <person name="Fraser A."/>
            <person name="Gentles S."/>
            <person name="Goble A."/>
            <person name="Hamlin N."/>
            <person name="Harris D.E."/>
            <person name="Hidalgo J."/>
            <person name="Hodgson G."/>
            <person name="Holroyd S."/>
            <person name="Hornsby T."/>
            <person name="Howarth S."/>
            <person name="Huckle E.J."/>
            <person name="Hunt S."/>
            <person name="Jagels K."/>
            <person name="James K.D."/>
            <person name="Jones L."/>
            <person name="Jones M."/>
            <person name="Leather S."/>
            <person name="McDonald S."/>
            <person name="McLean J."/>
            <person name="Mooney P."/>
            <person name="Moule S."/>
            <person name="Mungall K.L."/>
            <person name="Murphy L.D."/>
            <person name="Niblett D."/>
            <person name="Odell C."/>
            <person name="Oliver K."/>
            <person name="O'Neil S."/>
            <person name="Pearson D."/>
            <person name="Quail M.A."/>
            <person name="Rabbinowitsch E."/>
            <person name="Rutherford K.M."/>
            <person name="Rutter S."/>
            <person name="Saunders D."/>
            <person name="Seeger K."/>
            <person name="Sharp S."/>
            <person name="Skelton J."/>
            <person name="Simmonds M.N."/>
            <person name="Squares R."/>
            <person name="Squares S."/>
            <person name="Stevens K."/>
            <person name="Taylor K."/>
            <person name="Taylor R.G."/>
            <person name="Tivey A."/>
            <person name="Walsh S.V."/>
            <person name="Warren T."/>
            <person name="Whitehead S."/>
            <person name="Woodward J.R."/>
            <person name="Volckaert G."/>
            <person name="Aert R."/>
            <person name="Robben J."/>
            <person name="Grymonprez B."/>
            <person name="Weltjens I."/>
            <person name="Vanstreels E."/>
            <person name="Rieger M."/>
            <person name="Schaefer M."/>
            <person name="Mueller-Auer S."/>
            <person name="Gabel C."/>
            <person name="Fuchs M."/>
            <person name="Duesterhoeft A."/>
            <person name="Fritzc C."/>
            <person name="Holzer E."/>
            <person name="Moestl D."/>
            <person name="Hilbert H."/>
            <person name="Borzym K."/>
            <person name="Langer I."/>
            <person name="Beck A."/>
            <person name="Lehrach H."/>
            <person name="Reinhardt R."/>
            <person name="Pohl T.M."/>
            <person name="Eger P."/>
            <person name="Zimmermann W."/>
            <person name="Wedler H."/>
            <person name="Wambutt R."/>
            <person name="Purnelle B."/>
            <person name="Goffeau A."/>
            <person name="Cadieu E."/>
            <person name="Dreano S."/>
            <person name="Gloux S."/>
            <person name="Lelaure V."/>
            <person name="Mottier S."/>
            <person name="Galibert F."/>
            <person name="Aves S.J."/>
            <person name="Xiang Z."/>
            <person name="Hunt C."/>
            <person name="Moore K."/>
            <person name="Hurst S.M."/>
            <person name="Lucas M."/>
            <person name="Rochet M."/>
            <person name="Gaillardin C."/>
            <person name="Tallada V.A."/>
            <person name="Garzon A."/>
            <person name="Thode G."/>
            <person name="Daga R.R."/>
            <person name="Cruzado L."/>
            <person name="Jimenez J."/>
            <person name="Sanchez M."/>
            <person name="del Rey F."/>
            <person name="Benito J."/>
            <person name="Dominguez A."/>
            <person name="Revuelta J.L."/>
            <person name="Moreno S."/>
            <person name="Armstrong J."/>
            <person name="Forsburg S.L."/>
            <person name="Cerutti L."/>
            <person name="Lowe T."/>
            <person name="McCombie W.R."/>
            <person name="Paulsen I."/>
            <person name="Potashkin J."/>
            <person name="Shpakovski G.V."/>
            <person name="Ussery D."/>
            <person name="Barrell B.G."/>
            <person name="Nurse P."/>
        </authorList>
    </citation>
    <scope>NUCLEOTIDE SEQUENCE [LARGE SCALE GENOMIC DNA]</scope>
    <source>
        <strain>972 / ATCC 24843</strain>
    </source>
</reference>
<reference key="2">
    <citation type="journal article" date="2006" name="Nat. Biotechnol.">
        <title>ORFeome cloning and global analysis of protein localization in the fission yeast Schizosaccharomyces pombe.</title>
        <authorList>
            <person name="Matsuyama A."/>
            <person name="Arai R."/>
            <person name="Yashiroda Y."/>
            <person name="Shirai A."/>
            <person name="Kamata A."/>
            <person name="Sekido S."/>
            <person name="Kobayashi Y."/>
            <person name="Hashimoto A."/>
            <person name="Hamamoto M."/>
            <person name="Hiraoka Y."/>
            <person name="Horinouchi S."/>
            <person name="Yoshida M."/>
        </authorList>
    </citation>
    <scope>SUBCELLULAR LOCATION [LARGE SCALE ANALYSIS]</scope>
</reference>
<keyword id="KW-0175">Coiled coil</keyword>
<keyword id="KW-0472">Membrane</keyword>
<keyword id="KW-0496">Mitochondrion</keyword>
<keyword id="KW-0999">Mitochondrion inner membrane</keyword>
<keyword id="KW-1185">Reference proteome</keyword>
<keyword id="KW-0809">Transit peptide</keyword>
<keyword id="KW-0812">Transmembrane</keyword>
<keyword id="KW-1133">Transmembrane helix</keyword>
<dbReference type="EMBL" id="CU329671">
    <property type="protein sequence ID" value="CAA19009.1"/>
    <property type="molecule type" value="Genomic_DNA"/>
</dbReference>
<dbReference type="PIR" id="T40379">
    <property type="entry name" value="T40379"/>
</dbReference>
<dbReference type="RefSeq" id="NP_596092.1">
    <property type="nucleotide sequence ID" value="NM_001022008.2"/>
</dbReference>
<dbReference type="SMR" id="O59725"/>
<dbReference type="BioGRID" id="277550">
    <property type="interactions" value="6"/>
</dbReference>
<dbReference type="FunCoup" id="O59725">
    <property type="interactions" value="122"/>
</dbReference>
<dbReference type="STRING" id="284812.O59725"/>
<dbReference type="TCDB" id="9.B.216.1.2">
    <property type="family name" value="the micos complex component, mic60 (mic60) family"/>
</dbReference>
<dbReference type="iPTMnet" id="O59725"/>
<dbReference type="PaxDb" id="4896-SPBC3E7.05c.1"/>
<dbReference type="EnsemblFungi" id="SPBC3E7.05c.1">
    <property type="protein sequence ID" value="SPBC3E7.05c.1:pep"/>
    <property type="gene ID" value="SPBC3E7.05c"/>
</dbReference>
<dbReference type="GeneID" id="2541035"/>
<dbReference type="KEGG" id="spo:2541035"/>
<dbReference type="PomBase" id="SPBC3E7.05c">
    <property type="gene designation" value="mic60"/>
</dbReference>
<dbReference type="VEuPathDB" id="FungiDB:SPBC3E7.05c"/>
<dbReference type="eggNOG" id="KOG1854">
    <property type="taxonomic scope" value="Eukaryota"/>
</dbReference>
<dbReference type="HOGENOM" id="CLU_492713_0_0_1"/>
<dbReference type="InParanoid" id="O59725"/>
<dbReference type="OMA" id="HEYDELW"/>
<dbReference type="PhylomeDB" id="O59725"/>
<dbReference type="PRO" id="PR:O59725"/>
<dbReference type="Proteomes" id="UP000002485">
    <property type="component" value="Chromosome II"/>
</dbReference>
<dbReference type="GO" id="GO:0061617">
    <property type="term" value="C:MICOS complex"/>
    <property type="evidence" value="ECO:0000269"/>
    <property type="project" value="PomBase"/>
</dbReference>
<dbReference type="GO" id="GO:0044284">
    <property type="term" value="C:mitochondrial crista junction"/>
    <property type="evidence" value="ECO:0000269"/>
    <property type="project" value="PomBase"/>
</dbReference>
<dbReference type="GO" id="GO:0005739">
    <property type="term" value="C:mitochondrion"/>
    <property type="evidence" value="ECO:0007005"/>
    <property type="project" value="PomBase"/>
</dbReference>
<dbReference type="GO" id="GO:0042407">
    <property type="term" value="P:cristae formation"/>
    <property type="evidence" value="ECO:0000269"/>
    <property type="project" value="PomBase"/>
</dbReference>
<dbReference type="InterPro" id="IPR019133">
    <property type="entry name" value="MIC60"/>
</dbReference>
<dbReference type="PANTHER" id="PTHR15415:SF7">
    <property type="entry name" value="MICOS COMPLEX SUBUNIT MIC60"/>
    <property type="match status" value="1"/>
</dbReference>
<dbReference type="PANTHER" id="PTHR15415">
    <property type="entry name" value="MITOFILIN"/>
    <property type="match status" value="1"/>
</dbReference>
<dbReference type="Pfam" id="PF09731">
    <property type="entry name" value="Mitofilin"/>
    <property type="match status" value="2"/>
</dbReference>
<proteinExistence type="inferred from homology"/>
<organism>
    <name type="scientific">Schizosaccharomyces pombe (strain 972 / ATCC 24843)</name>
    <name type="common">Fission yeast</name>
    <dbReference type="NCBI Taxonomy" id="284812"/>
    <lineage>
        <taxon>Eukaryota</taxon>
        <taxon>Fungi</taxon>
        <taxon>Dikarya</taxon>
        <taxon>Ascomycota</taxon>
        <taxon>Taphrinomycotina</taxon>
        <taxon>Schizosaccharomycetes</taxon>
        <taxon>Schizosaccharomycetales</taxon>
        <taxon>Schizosaccharomycetaceae</taxon>
        <taxon>Schizosaccharomyces</taxon>
    </lineage>
</organism>
<accession>O59725</accession>
<comment type="function">
    <text evidence="1">Component of the MICOS complex, a large protein complex of the mitochondrial inner membrane that plays crucial roles in the maintenance of crista junctions, inner membrane architecture, and formation of contact sites to the outer membrane. Plays a role in keeping cristae membranes connected to the inner boundary membrane. Also promotes protein import via the mitochondrial intermembrane space assembly (MIA) pathway (By similarity).</text>
</comment>
<comment type="subunit">
    <text evidence="1">Component of the mitochondrial contact site and cristae organizing system (MICOS) complex.</text>
</comment>
<comment type="subcellular location">
    <subcellularLocation>
        <location evidence="1">Mitochondrion inner membrane</location>
        <topology evidence="1">Single-pass membrane protein</topology>
    </subcellularLocation>
</comment>
<comment type="similarity">
    <text evidence="4">Belongs to the MICOS complex subunit Mic60 family.</text>
</comment>
<name>MIC60_SCHPO</name>
<protein>
    <recommendedName>
        <fullName>MICOS complex subunit mic60</fullName>
    </recommendedName>
    <alternativeName>
        <fullName>Mitofilin</fullName>
    </alternativeName>
</protein>
<gene>
    <name type="primary">mic60</name>
    <name type="ORF">SPBC3E7.05c</name>
</gene>
<sequence length="550" mass="63215">MNRQLRTVKSCFSLQKTHQYRSFWIQSSLRALPPDVKQNKTEPIPFVPKPEEGSSNKSNSSKFRKRFLLLFLLGITGYSCSVVYCFKDPNFYDYFAEHTPFGKQVLYNVEQSWIGYKYLGGNRIKVDDSSPKLKQNSNNISKKQNSSRNDDTKVKKDTTIERPESLVVEIVDLPSEVTKDTAEESVWKDIGLDQETGLSVTAIPIITETLDHAHEQEIKDQSLRFESSLNEANELHGKLSKIQQEQEHLFEQRLREKVSEMESKLEALLIARDEKWQSAFESEKLRLQKLHEARLQQELFKLASVFESKLKNELTEQAITLEKLHLQSIKAQVEQERGSRLGRLQELRNSFQQLQELVRVVLHENGRVTRLVDVSNTLDDLNKDMRFHKLSEVRQHVNTLKEATKDDELAALASRVIEKIVDSGPILDKEELQTKFDTLSKEIYKTCFLTTESGFFGHLKSIILSQLPAAVFKSPDIVSVKKTLEDARSHLLKDDLDGSVRALLSLSQWPRALSRDWINACRRRMELQQAIEIIKASATLSSQLEDAQQA</sequence>
<feature type="transit peptide" description="Mitochondrion" evidence="2">
    <location>
        <begin position="1"/>
        <end position="38"/>
    </location>
</feature>
<feature type="chain" id="PRO_0000372365" description="MICOS complex subunit mic60">
    <location>
        <begin position="39"/>
        <end position="550"/>
    </location>
</feature>
<feature type="topological domain" description="Mitochondrial matrix" evidence="2">
    <location>
        <begin position="39"/>
        <end position="66"/>
    </location>
</feature>
<feature type="transmembrane region" description="Helical" evidence="2">
    <location>
        <begin position="67"/>
        <end position="86"/>
    </location>
</feature>
<feature type="topological domain" description="Mitochondrial intermembrane" evidence="2">
    <location>
        <begin position="87"/>
        <end position="550"/>
    </location>
</feature>
<feature type="region of interest" description="Disordered" evidence="3">
    <location>
        <begin position="35"/>
        <end position="59"/>
    </location>
</feature>
<feature type="region of interest" description="Disordered" evidence="3">
    <location>
        <begin position="128"/>
        <end position="158"/>
    </location>
</feature>
<feature type="coiled-coil region" evidence="2">
    <location>
        <begin position="214"/>
        <end position="275"/>
    </location>
</feature>
<feature type="compositionally biased region" description="Low complexity" evidence="3">
    <location>
        <begin position="132"/>
        <end position="147"/>
    </location>
</feature>
<feature type="compositionally biased region" description="Basic and acidic residues" evidence="3">
    <location>
        <begin position="148"/>
        <end position="158"/>
    </location>
</feature>